<feature type="chain" id="PRO_1000187397" description="Methylthioribose kinase">
    <location>
        <begin position="1"/>
        <end position="393"/>
    </location>
</feature>
<feature type="binding site" evidence="1">
    <location>
        <position position="38"/>
    </location>
    <ligand>
        <name>ATP</name>
        <dbReference type="ChEBI" id="CHEBI:30616"/>
    </ligand>
</feature>
<feature type="binding site" evidence="1">
    <location>
        <position position="53"/>
    </location>
    <ligand>
        <name>ATP</name>
        <dbReference type="ChEBI" id="CHEBI:30616"/>
    </ligand>
</feature>
<feature type="binding site" evidence="1">
    <location>
        <begin position="107"/>
        <end position="109"/>
    </location>
    <ligand>
        <name>ATP</name>
        <dbReference type="ChEBI" id="CHEBI:30616"/>
    </ligand>
</feature>
<feature type="binding site" evidence="1">
    <location>
        <position position="225"/>
    </location>
    <ligand>
        <name>substrate</name>
    </ligand>
</feature>
<feature type="binding site" evidence="1">
    <location>
        <begin position="242"/>
        <end position="244"/>
    </location>
    <ligand>
        <name>ATP</name>
        <dbReference type="ChEBI" id="CHEBI:30616"/>
    </ligand>
</feature>
<feature type="binding site" evidence="1">
    <location>
        <position position="332"/>
    </location>
    <ligand>
        <name>substrate</name>
    </ligand>
</feature>
<name>MTNK_BACAC</name>
<dbReference type="EC" id="2.7.1.100" evidence="1"/>
<dbReference type="EMBL" id="CP001215">
    <property type="protein sequence ID" value="ACP17563.1"/>
    <property type="molecule type" value="Genomic_DNA"/>
</dbReference>
<dbReference type="RefSeq" id="WP_000542711.1">
    <property type="nucleotide sequence ID" value="NC_012581.1"/>
</dbReference>
<dbReference type="SMR" id="C3LIA3"/>
<dbReference type="GeneID" id="45023923"/>
<dbReference type="KEGG" id="bah:BAMEG_4291"/>
<dbReference type="HOGENOM" id="CLU_033681_0_0_9"/>
<dbReference type="UniPathway" id="UPA00904">
    <property type="reaction ID" value="UER00872"/>
</dbReference>
<dbReference type="GO" id="GO:0005524">
    <property type="term" value="F:ATP binding"/>
    <property type="evidence" value="ECO:0007669"/>
    <property type="project" value="UniProtKB-UniRule"/>
</dbReference>
<dbReference type="GO" id="GO:0046522">
    <property type="term" value="F:S-methyl-5-thioribose kinase activity"/>
    <property type="evidence" value="ECO:0007669"/>
    <property type="project" value="UniProtKB-UniRule"/>
</dbReference>
<dbReference type="GO" id="GO:0019509">
    <property type="term" value="P:L-methionine salvage from methylthioadenosine"/>
    <property type="evidence" value="ECO:0007669"/>
    <property type="project" value="UniProtKB-UniRule"/>
</dbReference>
<dbReference type="FunFam" id="3.30.200.20:FF:000436">
    <property type="entry name" value="Methylthioribose kinase"/>
    <property type="match status" value="1"/>
</dbReference>
<dbReference type="FunFam" id="3.90.1200.10:FF:000008">
    <property type="entry name" value="Methylthioribose kinase"/>
    <property type="match status" value="1"/>
</dbReference>
<dbReference type="Gene3D" id="3.90.1200.10">
    <property type="match status" value="1"/>
</dbReference>
<dbReference type="Gene3D" id="3.30.200.20">
    <property type="entry name" value="Phosphorylase Kinase, domain 1"/>
    <property type="match status" value="1"/>
</dbReference>
<dbReference type="HAMAP" id="MF_01683">
    <property type="entry name" value="Salvage_MtnK"/>
    <property type="match status" value="1"/>
</dbReference>
<dbReference type="InterPro" id="IPR002575">
    <property type="entry name" value="Aminoglycoside_PTrfase"/>
</dbReference>
<dbReference type="InterPro" id="IPR011009">
    <property type="entry name" value="Kinase-like_dom_sf"/>
</dbReference>
<dbReference type="InterPro" id="IPR009212">
    <property type="entry name" value="Methylthioribose_kinase"/>
</dbReference>
<dbReference type="NCBIfam" id="TIGR01767">
    <property type="entry name" value="MTRK"/>
    <property type="match status" value="1"/>
</dbReference>
<dbReference type="PANTHER" id="PTHR34273">
    <property type="entry name" value="METHYLTHIORIBOSE KINASE"/>
    <property type="match status" value="1"/>
</dbReference>
<dbReference type="PANTHER" id="PTHR34273:SF2">
    <property type="entry name" value="METHYLTHIORIBOSE KINASE"/>
    <property type="match status" value="1"/>
</dbReference>
<dbReference type="Pfam" id="PF01636">
    <property type="entry name" value="APH"/>
    <property type="match status" value="1"/>
</dbReference>
<dbReference type="PIRSF" id="PIRSF031134">
    <property type="entry name" value="MTRK"/>
    <property type="match status" value="1"/>
</dbReference>
<dbReference type="SUPFAM" id="SSF56112">
    <property type="entry name" value="Protein kinase-like (PK-like)"/>
    <property type="match status" value="1"/>
</dbReference>
<proteinExistence type="inferred from homology"/>
<sequence length="393" mass="44779">MGYYSLTEVTAVQYAKEHGYFEKKANVVCHEIGDGNLNYVFKLDDGEKSIIIKQALPYAKVVGESWPLSIKRATIESKALQIFAKYVPEYVPVVYSHDEELAVTVIEDLSRLTITRKGLIDGEEYPLLSQHIGRFLANVLFYTSDFGLQSEEKRVLEGTFVNPDLCKITEDLVFTDPFGHYDTNDYEPELQLTIDELWSDKTLKLKVAQYKYKFLTRKEALIHGDLHTGSIFSSPSETKVIDPEFATYGPFGFDIGQFIANLLLNALSREEEQRGVLFFHIEKTWSYFVETFTKLWIGEGVEAYTKEKQWLPIILQNIFTDAVGFAGCELIRRTIGLAHVADLDEITNKETRIQAKKQALSLGKELIKYESKNADIQLFRTLFQQTVSGGIKA</sequence>
<protein>
    <recommendedName>
        <fullName evidence="1">Methylthioribose kinase</fullName>
        <shortName evidence="1">MTR kinase</shortName>
        <ecNumber evidence="1">2.7.1.100</ecNumber>
    </recommendedName>
</protein>
<reference key="1">
    <citation type="submission" date="2008-10" db="EMBL/GenBank/DDBJ databases">
        <title>Genome sequence of Bacillus anthracis str. CDC 684.</title>
        <authorList>
            <person name="Dodson R.J."/>
            <person name="Munk A.C."/>
            <person name="Brettin T."/>
            <person name="Bruce D."/>
            <person name="Detter C."/>
            <person name="Tapia R."/>
            <person name="Han C."/>
            <person name="Sutton G."/>
            <person name="Sims D."/>
        </authorList>
    </citation>
    <scope>NUCLEOTIDE SEQUENCE [LARGE SCALE GENOMIC DNA]</scope>
    <source>
        <strain>CDC 684 / NRRL 3495</strain>
    </source>
</reference>
<gene>
    <name evidence="1" type="primary">mtnK</name>
    <name type="ordered locus">BAMEG_4291</name>
</gene>
<organism>
    <name type="scientific">Bacillus anthracis (strain CDC 684 / NRRL 3495)</name>
    <dbReference type="NCBI Taxonomy" id="568206"/>
    <lineage>
        <taxon>Bacteria</taxon>
        <taxon>Bacillati</taxon>
        <taxon>Bacillota</taxon>
        <taxon>Bacilli</taxon>
        <taxon>Bacillales</taxon>
        <taxon>Bacillaceae</taxon>
        <taxon>Bacillus</taxon>
        <taxon>Bacillus cereus group</taxon>
    </lineage>
</organism>
<accession>C3LIA3</accession>
<keyword id="KW-0028">Amino-acid biosynthesis</keyword>
<keyword id="KW-0067">ATP-binding</keyword>
<keyword id="KW-0418">Kinase</keyword>
<keyword id="KW-0486">Methionine biosynthesis</keyword>
<keyword id="KW-0547">Nucleotide-binding</keyword>
<keyword id="KW-0808">Transferase</keyword>
<comment type="function">
    <text evidence="1">Catalyzes the phosphorylation of methylthioribose into methylthioribose-1-phosphate.</text>
</comment>
<comment type="catalytic activity">
    <reaction evidence="1">
        <text>5-(methylsulfanyl)-D-ribose + ATP = 5-(methylsulfanyl)-alpha-D-ribose 1-phosphate + ADP + H(+)</text>
        <dbReference type="Rhea" id="RHEA:22312"/>
        <dbReference type="ChEBI" id="CHEBI:15378"/>
        <dbReference type="ChEBI" id="CHEBI:30616"/>
        <dbReference type="ChEBI" id="CHEBI:58533"/>
        <dbReference type="ChEBI" id="CHEBI:78440"/>
        <dbReference type="ChEBI" id="CHEBI:456216"/>
        <dbReference type="EC" id="2.7.1.100"/>
    </reaction>
</comment>
<comment type="pathway">
    <text evidence="1">Amino-acid biosynthesis; L-methionine biosynthesis via salvage pathway; S-methyl-5-thio-alpha-D-ribose 1-phosphate from S-methyl-5'-thioadenosine (hydrolase route): step 2/2.</text>
</comment>
<comment type="subunit">
    <text evidence="1">Homodimer.</text>
</comment>
<comment type="similarity">
    <text evidence="1">Belongs to the methylthioribose kinase family.</text>
</comment>
<evidence type="ECO:0000255" key="1">
    <source>
        <dbReference type="HAMAP-Rule" id="MF_01683"/>
    </source>
</evidence>